<protein>
    <recommendedName>
        <fullName evidence="1">Bacteriohemerythrin</fullName>
    </recommendedName>
</protein>
<reference key="1">
    <citation type="submission" date="2006-12" db="EMBL/GenBank/DDBJ databases">
        <authorList>
            <person name="Fouts D.E."/>
            <person name="Nelson K.E."/>
            <person name="Sebastian Y."/>
        </authorList>
    </citation>
    <scope>NUCLEOTIDE SEQUENCE [LARGE SCALE GENOMIC DNA]</scope>
    <source>
        <strain>81-176</strain>
    </source>
</reference>
<keyword id="KW-0408">Iron</keyword>
<keyword id="KW-0479">Metal-binding</keyword>
<keyword id="KW-0561">Oxygen transport</keyword>
<keyword id="KW-0813">Transport</keyword>
<organism>
    <name type="scientific">Campylobacter jejuni subsp. jejuni serotype O:23/36 (strain 81-176)</name>
    <dbReference type="NCBI Taxonomy" id="354242"/>
    <lineage>
        <taxon>Bacteria</taxon>
        <taxon>Pseudomonadati</taxon>
        <taxon>Campylobacterota</taxon>
        <taxon>Epsilonproteobacteria</taxon>
        <taxon>Campylobacterales</taxon>
        <taxon>Campylobacteraceae</taxon>
        <taxon>Campylobacter</taxon>
    </lineage>
</organism>
<gene>
    <name type="ordered locus">CJJ81176_0266</name>
</gene>
<name>HEMTB_CAMJJ</name>
<proteinExistence type="inferred from homology"/>
<sequence>MTYNEKIISMNNDLLDHQHKELFEISKKLSLMNQRHVGTKELKIVLRELLIMINRHFSDEEAFMREIGYPYINHHTRIHRKIILEIEEIIISEAKFVNIMTEKLNLVVQDFIFKHTAKEDSKIVKYYEEKFKK</sequence>
<accession>A1VXW3</accession>
<feature type="chain" id="PRO_1000017979" description="Bacteriohemerythrin">
    <location>
        <begin position="1"/>
        <end position="133"/>
    </location>
</feature>
<feature type="binding site" evidence="1">
    <location>
        <position position="19"/>
    </location>
    <ligand>
        <name>Fe cation</name>
        <dbReference type="ChEBI" id="CHEBI:24875"/>
        <label>1</label>
    </ligand>
</feature>
<feature type="binding site" evidence="1">
    <location>
        <position position="56"/>
    </location>
    <ligand>
        <name>Fe cation</name>
        <dbReference type="ChEBI" id="CHEBI:24875"/>
        <label>1</label>
    </ligand>
</feature>
<feature type="binding site" evidence="1">
    <location>
        <position position="60"/>
    </location>
    <ligand>
        <name>Fe cation</name>
        <dbReference type="ChEBI" id="CHEBI:24875"/>
        <label>1</label>
    </ligand>
</feature>
<feature type="binding site" evidence="1">
    <location>
        <position position="60"/>
    </location>
    <ligand>
        <name>Fe cation</name>
        <dbReference type="ChEBI" id="CHEBI:24875"/>
        <label>2</label>
    </ligand>
</feature>
<feature type="binding site" evidence="1">
    <location>
        <position position="75"/>
    </location>
    <ligand>
        <name>Fe cation</name>
        <dbReference type="ChEBI" id="CHEBI:24875"/>
        <label>2</label>
    </ligand>
</feature>
<feature type="binding site" evidence="1">
    <location>
        <position position="79"/>
    </location>
    <ligand>
        <name>Fe cation</name>
        <dbReference type="ChEBI" id="CHEBI:24875"/>
        <label>2</label>
    </ligand>
</feature>
<feature type="binding site" evidence="1">
    <location>
        <position position="115"/>
    </location>
    <ligand>
        <name>Fe cation</name>
        <dbReference type="ChEBI" id="CHEBI:24875"/>
        <label>2</label>
    </ligand>
</feature>
<feature type="binding site" evidence="1">
    <location>
        <position position="120"/>
    </location>
    <ligand>
        <name>Fe cation</name>
        <dbReference type="ChEBI" id="CHEBI:24875"/>
        <label>1</label>
    </ligand>
</feature>
<feature type="binding site" evidence="1">
    <location>
        <position position="120"/>
    </location>
    <ligand>
        <name>Fe cation</name>
        <dbReference type="ChEBI" id="CHEBI:24875"/>
        <label>2</label>
    </ligand>
</feature>
<evidence type="ECO:0000255" key="1">
    <source>
        <dbReference type="HAMAP-Rule" id="MF_00556"/>
    </source>
</evidence>
<comment type="function">
    <text evidence="1">Oxygen-binding protein. May be involved in a storage mechanism or for delivery to oxygen-requiring enzymes. The oxygen-binding site contains two iron atoms.</text>
</comment>
<comment type="subunit">
    <text evidence="1">Monomer.</text>
</comment>
<comment type="similarity">
    <text evidence="1">Belongs to the hemerythrin family.</text>
</comment>
<dbReference type="EMBL" id="CP000538">
    <property type="protein sequence ID" value="EAQ73292.1"/>
    <property type="molecule type" value="Genomic_DNA"/>
</dbReference>
<dbReference type="RefSeq" id="WP_009881923.1">
    <property type="nucleotide sequence ID" value="NC_008787.1"/>
</dbReference>
<dbReference type="SMR" id="A1VXW3"/>
<dbReference type="KEGG" id="cjj:CJJ81176_0266"/>
<dbReference type="eggNOG" id="COG2703">
    <property type="taxonomic scope" value="Bacteria"/>
</dbReference>
<dbReference type="HOGENOM" id="CLU_086902_3_2_7"/>
<dbReference type="Proteomes" id="UP000000646">
    <property type="component" value="Chromosome"/>
</dbReference>
<dbReference type="GO" id="GO:0005506">
    <property type="term" value="F:iron ion binding"/>
    <property type="evidence" value="ECO:0007669"/>
    <property type="project" value="UniProtKB-UniRule"/>
</dbReference>
<dbReference type="GO" id="GO:0005344">
    <property type="term" value="F:oxygen carrier activity"/>
    <property type="evidence" value="ECO:0007669"/>
    <property type="project" value="UniProtKB-UniRule"/>
</dbReference>
<dbReference type="CDD" id="cd12107">
    <property type="entry name" value="Hemerythrin"/>
    <property type="match status" value="1"/>
</dbReference>
<dbReference type="Gene3D" id="1.20.120.50">
    <property type="entry name" value="Hemerythrin-like"/>
    <property type="match status" value="1"/>
</dbReference>
<dbReference type="HAMAP" id="MF_00556">
    <property type="entry name" value="Hemerythrin"/>
    <property type="match status" value="1"/>
</dbReference>
<dbReference type="InterPro" id="IPR023504">
    <property type="entry name" value="Bacteriohemerythrin-like"/>
</dbReference>
<dbReference type="InterPro" id="IPR016131">
    <property type="entry name" value="Haemerythrin_Fe_BS"/>
</dbReference>
<dbReference type="InterPro" id="IPR050669">
    <property type="entry name" value="Hemerythrin"/>
</dbReference>
<dbReference type="InterPro" id="IPR012312">
    <property type="entry name" value="Hemerythrin-like"/>
</dbReference>
<dbReference type="InterPro" id="IPR035938">
    <property type="entry name" value="Hemerythrin-like_sf"/>
</dbReference>
<dbReference type="InterPro" id="IPR012827">
    <property type="entry name" value="Hemerythrin_metal-bd"/>
</dbReference>
<dbReference type="NCBIfam" id="TIGR02481">
    <property type="entry name" value="hemeryth_dom"/>
    <property type="match status" value="1"/>
</dbReference>
<dbReference type="PANTHER" id="PTHR37164">
    <property type="entry name" value="BACTERIOHEMERYTHRIN"/>
    <property type="match status" value="1"/>
</dbReference>
<dbReference type="PANTHER" id="PTHR37164:SF1">
    <property type="entry name" value="BACTERIOHEMERYTHRIN"/>
    <property type="match status" value="1"/>
</dbReference>
<dbReference type="Pfam" id="PF01814">
    <property type="entry name" value="Hemerythrin"/>
    <property type="match status" value="1"/>
</dbReference>
<dbReference type="SUPFAM" id="SSF47188">
    <property type="entry name" value="Hemerythrin-like"/>
    <property type="match status" value="1"/>
</dbReference>
<dbReference type="PROSITE" id="PS00550">
    <property type="entry name" value="HEMERYTHRINS"/>
    <property type="match status" value="1"/>
</dbReference>